<accession>O43242</accession>
<accession>B3KMW9</accession>
<accession>B4DT72</accession>
<accession>Q96EI2</accession>
<accession>Q9BQA4</accession>
<comment type="function">
    <text evidence="3">Component of the 26S proteasome, a multiprotein complex involved in the ATP-dependent degradation of ubiquitinated proteins. This complex plays a key role in the maintenance of protein homeostasis by removing misfolded or damaged proteins, which could impair cellular functions, and by removing proteins whose functions are no longer required. Therefore, the proteasome participates in numerous cellular processes, including cell cycle progression, apoptosis, or DNA damage repair.</text>
</comment>
<comment type="subunit">
    <text evidence="4 5 6 7">Component of the 19S proteasome regulatory particle complex. The 26S proteasome consists of a 20S core particle (CP) and two 19S regulatory subunits (RP). The regulatory particle is made of a lid composed of 9 subunits including PSMD3, a base containing 6 ATPases and few additional components (PubMed:27342858, PubMed:27428775). Interacts with UBQLN1 (via ubiquitin-like domain) (PubMed:15147878). Interacts with ERCC6 (PubMed:26030138).</text>
</comment>
<comment type="interaction">
    <interactant intactId="EBI-357622">
        <id>O43242</id>
    </interactant>
    <interactant intactId="EBI-744115">
        <id>Q9C0F1</id>
        <label>CEP44</label>
    </interactant>
    <organismsDiffer>false</organismsDiffer>
    <experiments>3</experiments>
</comment>
<comment type="interaction">
    <interactant intactId="EBI-357622">
        <id>O43242</id>
    </interactant>
    <interactant intactId="EBI-466029">
        <id>P42858</id>
        <label>HTT</label>
    </interactant>
    <organismsDiffer>false</organismsDiffer>
    <experiments>3</experiments>
</comment>
<comment type="interaction">
    <interactant intactId="EBI-357622">
        <id>O43242</id>
    </interactant>
    <interactant intactId="EBI-307386">
        <id>P25963</id>
        <label>NFKBIA</label>
    </interactant>
    <organismsDiffer>false</organismsDiffer>
    <experiments>3</experiments>
</comment>
<comment type="interaction">
    <interactant intactId="EBI-357622">
        <id>O43242</id>
    </interactant>
    <interactant intactId="EBI-617403">
        <id>P16885</id>
        <label>PLCG2</label>
    </interactant>
    <organismsDiffer>false</organismsDiffer>
    <experiments>2</experiments>
</comment>
<comment type="interaction">
    <interactant intactId="EBI-357622">
        <id>O43242</id>
    </interactant>
    <interactant intactId="EBI-744322">
        <id>O43395</id>
        <label>PRPF3</label>
    </interactant>
    <organismsDiffer>false</organismsDiffer>
    <experiments>3</experiments>
</comment>
<comment type="interaction">
    <interactant intactId="EBI-357622">
        <id>O43242</id>
    </interactant>
    <interactant intactId="EBI-357793">
        <id>P60900</id>
        <label>PSMA6</label>
    </interactant>
    <organismsDiffer>false</organismsDiffer>
    <experiments>4</experiments>
</comment>
<comment type="interaction">
    <interactant intactId="EBI-357622">
        <id>O43242</id>
    </interactant>
    <interactant intactId="EBI-357648">
        <id>Q13200</id>
        <label>PSMD2</label>
    </interactant>
    <organismsDiffer>false</organismsDiffer>
    <experiments>4</experiments>
</comment>
<comment type="interaction">
    <interactant intactId="EBI-357622">
        <id>O43242</id>
    </interactant>
    <interactant intactId="EBI-359318">
        <id>P55036</id>
        <label>PSMD4</label>
    </interactant>
    <organismsDiffer>false</organismsDiffer>
    <experiments>5</experiments>
</comment>
<comment type="interaction">
    <interactant intactId="EBI-357622">
        <id>O43242</id>
    </interactant>
    <interactant intactId="EBI-79819">
        <id>P60896</id>
        <label>SEM1</label>
    </interactant>
    <organismsDiffer>false</organismsDiffer>
    <experiments>4</experiments>
</comment>
<comment type="interaction">
    <interactant intactId="EBI-357622">
        <id>O43242</id>
    </interactant>
    <interactant intactId="EBI-740718">
        <id>O43298</id>
        <label>ZBTB43</label>
    </interactant>
    <organismsDiffer>false</organismsDiffer>
    <experiments>7</experiments>
</comment>
<comment type="alternative products">
    <event type="alternative splicing"/>
    <isoform>
        <id>O43242-1</id>
        <name>1</name>
        <sequence type="displayed"/>
    </isoform>
    <isoform>
        <id>O43242-2</id>
        <name>2</name>
        <sequence type="described" ref="VSP_056362 VSP_056363"/>
    </isoform>
</comment>
<comment type="similarity">
    <text evidence="9">Belongs to the proteasome subunit S3 family.</text>
</comment>
<name>PSMD3_HUMAN</name>
<organism>
    <name type="scientific">Homo sapiens</name>
    <name type="common">Human</name>
    <dbReference type="NCBI Taxonomy" id="9606"/>
    <lineage>
        <taxon>Eukaryota</taxon>
        <taxon>Metazoa</taxon>
        <taxon>Chordata</taxon>
        <taxon>Craniata</taxon>
        <taxon>Vertebrata</taxon>
        <taxon>Euteleostomi</taxon>
        <taxon>Mammalia</taxon>
        <taxon>Eutheria</taxon>
        <taxon>Euarchontoglires</taxon>
        <taxon>Primates</taxon>
        <taxon>Haplorrhini</taxon>
        <taxon>Catarrhini</taxon>
        <taxon>Hominidae</taxon>
        <taxon>Homo</taxon>
    </lineage>
</organism>
<dbReference type="EMBL" id="D67025">
    <property type="protein sequence ID" value="BAA23651.1"/>
    <property type="molecule type" value="mRNA"/>
</dbReference>
<dbReference type="EMBL" id="BT007217">
    <property type="protein sequence ID" value="AAP35881.1"/>
    <property type="molecule type" value="mRNA"/>
</dbReference>
<dbReference type="EMBL" id="AK022896">
    <property type="protein sequence ID" value="BAG51131.1"/>
    <property type="molecule type" value="mRNA"/>
</dbReference>
<dbReference type="EMBL" id="AK300081">
    <property type="protein sequence ID" value="BAG61884.1"/>
    <property type="molecule type" value="mRNA"/>
</dbReference>
<dbReference type="EMBL" id="AC090844">
    <property type="status" value="NOT_ANNOTATED_CDS"/>
    <property type="molecule type" value="Genomic_DNA"/>
</dbReference>
<dbReference type="EMBL" id="CH471152">
    <property type="protein sequence ID" value="EAW60625.1"/>
    <property type="molecule type" value="Genomic_DNA"/>
</dbReference>
<dbReference type="EMBL" id="BC000074">
    <property type="protein sequence ID" value="AAH00074.1"/>
    <property type="molecule type" value="mRNA"/>
</dbReference>
<dbReference type="EMBL" id="BC004859">
    <property type="protein sequence ID" value="AAH04859.1"/>
    <property type="molecule type" value="mRNA"/>
</dbReference>
<dbReference type="EMBL" id="BC012302">
    <property type="protein sequence ID" value="AAH12302.1"/>
    <property type="molecule type" value="mRNA"/>
</dbReference>
<dbReference type="EMBL" id="BC020518">
    <property type="protein sequence ID" value="AAH20518.1"/>
    <property type="molecule type" value="mRNA"/>
</dbReference>
<dbReference type="EMBL" id="BC025686">
    <property type="protein sequence ID" value="AAH25686.1"/>
    <property type="molecule type" value="mRNA"/>
</dbReference>
<dbReference type="CCDS" id="CCDS11356.1">
    <molecule id="O43242-1"/>
</dbReference>
<dbReference type="RefSeq" id="NP_002800.2">
    <molecule id="O43242-1"/>
    <property type="nucleotide sequence ID" value="NM_002809.3"/>
</dbReference>
<dbReference type="PDB" id="5GJQ">
    <property type="method" value="EM"/>
    <property type="resolution" value="4.50 A"/>
    <property type="chains" value="S=1-534"/>
</dbReference>
<dbReference type="PDB" id="5GJR">
    <property type="method" value="EM"/>
    <property type="resolution" value="3.50 A"/>
    <property type="chains" value="6/S=1-525"/>
</dbReference>
<dbReference type="PDB" id="5L4K">
    <property type="method" value="EM"/>
    <property type="resolution" value="4.50 A"/>
    <property type="chains" value="S=1-534"/>
</dbReference>
<dbReference type="PDB" id="5LN3">
    <property type="method" value="EM"/>
    <property type="resolution" value="6.80 A"/>
    <property type="chains" value="S=1-534"/>
</dbReference>
<dbReference type="PDB" id="5M32">
    <property type="method" value="EM"/>
    <property type="resolution" value="3.80 A"/>
    <property type="chains" value="j=1-534"/>
</dbReference>
<dbReference type="PDB" id="5T0C">
    <property type="method" value="EM"/>
    <property type="resolution" value="3.80 A"/>
    <property type="chains" value="AV/BV=2-534"/>
</dbReference>
<dbReference type="PDB" id="5T0G">
    <property type="method" value="EM"/>
    <property type="resolution" value="4.40 A"/>
    <property type="chains" value="V=2-534"/>
</dbReference>
<dbReference type="PDB" id="5T0H">
    <property type="method" value="EM"/>
    <property type="resolution" value="6.80 A"/>
    <property type="chains" value="V=2-534"/>
</dbReference>
<dbReference type="PDB" id="5T0I">
    <property type="method" value="EM"/>
    <property type="resolution" value="8.00 A"/>
    <property type="chains" value="V=2-534"/>
</dbReference>
<dbReference type="PDB" id="5T0J">
    <property type="method" value="EM"/>
    <property type="resolution" value="8.00 A"/>
    <property type="chains" value="V=2-534"/>
</dbReference>
<dbReference type="PDB" id="5VFP">
    <property type="method" value="EM"/>
    <property type="resolution" value="4.20 A"/>
    <property type="chains" value="V=18-497"/>
</dbReference>
<dbReference type="PDB" id="5VFQ">
    <property type="method" value="EM"/>
    <property type="resolution" value="4.20 A"/>
    <property type="chains" value="V=18-497"/>
</dbReference>
<dbReference type="PDB" id="5VFR">
    <property type="method" value="EM"/>
    <property type="resolution" value="4.90 A"/>
    <property type="chains" value="V=18-497"/>
</dbReference>
<dbReference type="PDB" id="5VFS">
    <property type="method" value="EM"/>
    <property type="resolution" value="3.60 A"/>
    <property type="chains" value="V=18-497"/>
</dbReference>
<dbReference type="PDB" id="5VFT">
    <property type="method" value="EM"/>
    <property type="resolution" value="7.00 A"/>
    <property type="chains" value="V=18-497"/>
</dbReference>
<dbReference type="PDB" id="5VFU">
    <property type="method" value="EM"/>
    <property type="resolution" value="5.80 A"/>
    <property type="chains" value="V=18-497"/>
</dbReference>
<dbReference type="PDB" id="5VGZ">
    <property type="method" value="EM"/>
    <property type="resolution" value="3.70 A"/>
    <property type="chains" value="V=18-505"/>
</dbReference>
<dbReference type="PDB" id="5VHF">
    <property type="method" value="EM"/>
    <property type="resolution" value="5.70 A"/>
    <property type="chains" value="V=323-505"/>
</dbReference>
<dbReference type="PDB" id="5VHH">
    <property type="method" value="EM"/>
    <property type="resolution" value="6.10 A"/>
    <property type="chains" value="V=18-505"/>
</dbReference>
<dbReference type="PDB" id="5VHI">
    <property type="method" value="EM"/>
    <property type="resolution" value="6.80 A"/>
    <property type="chains" value="V=18-505"/>
</dbReference>
<dbReference type="PDB" id="5VHS">
    <property type="method" value="EM"/>
    <property type="resolution" value="8.80 A"/>
    <property type="chains" value="V=18-505"/>
</dbReference>
<dbReference type="PDB" id="6MSB">
    <property type="method" value="EM"/>
    <property type="resolution" value="3.00 A"/>
    <property type="chains" value="V=1-534"/>
</dbReference>
<dbReference type="PDB" id="6MSD">
    <property type="method" value="EM"/>
    <property type="resolution" value="3.20 A"/>
    <property type="chains" value="V=1-534"/>
</dbReference>
<dbReference type="PDB" id="6MSE">
    <property type="method" value="EM"/>
    <property type="resolution" value="3.30 A"/>
    <property type="chains" value="D=314-523"/>
</dbReference>
<dbReference type="PDB" id="6MSG">
    <property type="method" value="EM"/>
    <property type="resolution" value="3.50 A"/>
    <property type="chains" value="V=2-534"/>
</dbReference>
<dbReference type="PDB" id="6MSH">
    <property type="method" value="EM"/>
    <property type="resolution" value="3.60 A"/>
    <property type="chains" value="V=2-534"/>
</dbReference>
<dbReference type="PDB" id="6MSJ">
    <property type="method" value="EM"/>
    <property type="resolution" value="3.30 A"/>
    <property type="chains" value="V=2-534"/>
</dbReference>
<dbReference type="PDB" id="6MSK">
    <property type="method" value="EM"/>
    <property type="resolution" value="3.20 A"/>
    <property type="chains" value="V=2-534"/>
</dbReference>
<dbReference type="PDB" id="6WJD">
    <property type="method" value="EM"/>
    <property type="resolution" value="4.80 A"/>
    <property type="chains" value="V=1-534"/>
</dbReference>
<dbReference type="PDB" id="6WJN">
    <property type="method" value="EM"/>
    <property type="resolution" value="5.70 A"/>
    <property type="chains" value="V=18-497"/>
</dbReference>
<dbReference type="PDB" id="7QXN">
    <property type="method" value="EM"/>
    <property type="resolution" value="3.70 A"/>
    <property type="chains" value="V=2-534"/>
</dbReference>
<dbReference type="PDB" id="7QXP">
    <property type="method" value="EM"/>
    <property type="resolution" value="3.60 A"/>
    <property type="chains" value="V=2-534"/>
</dbReference>
<dbReference type="PDB" id="7QXU">
    <property type="method" value="EM"/>
    <property type="resolution" value="4.30 A"/>
    <property type="chains" value="V=2-534"/>
</dbReference>
<dbReference type="PDB" id="7QXW">
    <property type="method" value="EM"/>
    <property type="resolution" value="4.10 A"/>
    <property type="chains" value="V=2-534"/>
</dbReference>
<dbReference type="PDB" id="7QXX">
    <property type="method" value="EM"/>
    <property type="resolution" value="4.40 A"/>
    <property type="chains" value="V=2-534"/>
</dbReference>
<dbReference type="PDB" id="7QY7">
    <property type="method" value="EM"/>
    <property type="resolution" value="4.70 A"/>
    <property type="chains" value="V=2-534"/>
</dbReference>
<dbReference type="PDB" id="7QYA">
    <property type="method" value="EM"/>
    <property type="resolution" value="4.80 A"/>
    <property type="chains" value="V=2-534"/>
</dbReference>
<dbReference type="PDB" id="7QYB">
    <property type="method" value="EM"/>
    <property type="resolution" value="4.10 A"/>
    <property type="chains" value="V=2-534"/>
</dbReference>
<dbReference type="PDB" id="7W37">
    <property type="method" value="EM"/>
    <property type="resolution" value="3.00 A"/>
    <property type="chains" value="V=1-534"/>
</dbReference>
<dbReference type="PDB" id="7W38">
    <property type="method" value="EM"/>
    <property type="resolution" value="3.10 A"/>
    <property type="chains" value="V=1-534"/>
</dbReference>
<dbReference type="PDB" id="7W39">
    <property type="method" value="EM"/>
    <property type="resolution" value="3.20 A"/>
    <property type="chains" value="V=1-534"/>
</dbReference>
<dbReference type="PDB" id="7W3A">
    <property type="method" value="EM"/>
    <property type="resolution" value="3.50 A"/>
    <property type="chains" value="V=1-534"/>
</dbReference>
<dbReference type="PDB" id="7W3B">
    <property type="method" value="EM"/>
    <property type="resolution" value="3.60 A"/>
    <property type="chains" value="V=1-534"/>
</dbReference>
<dbReference type="PDB" id="7W3C">
    <property type="method" value="EM"/>
    <property type="resolution" value="3.40 A"/>
    <property type="chains" value="V=1-534"/>
</dbReference>
<dbReference type="PDB" id="7W3F">
    <property type="method" value="EM"/>
    <property type="resolution" value="3.30 A"/>
    <property type="chains" value="V=1-534"/>
</dbReference>
<dbReference type="PDB" id="7W3G">
    <property type="method" value="EM"/>
    <property type="resolution" value="3.20 A"/>
    <property type="chains" value="V=1-534"/>
</dbReference>
<dbReference type="PDB" id="7W3H">
    <property type="method" value="EM"/>
    <property type="resolution" value="3.20 A"/>
    <property type="chains" value="V=1-534"/>
</dbReference>
<dbReference type="PDB" id="7W3I">
    <property type="method" value="EM"/>
    <property type="resolution" value="3.50 A"/>
    <property type="chains" value="V=1-534"/>
</dbReference>
<dbReference type="PDB" id="7W3J">
    <property type="method" value="EM"/>
    <property type="resolution" value="3.50 A"/>
    <property type="chains" value="V=1-534"/>
</dbReference>
<dbReference type="PDB" id="7W3K">
    <property type="method" value="EM"/>
    <property type="resolution" value="3.60 A"/>
    <property type="chains" value="V=1-534"/>
</dbReference>
<dbReference type="PDB" id="7W3M">
    <property type="method" value="EM"/>
    <property type="resolution" value="3.50 A"/>
    <property type="chains" value="V=1-534"/>
</dbReference>
<dbReference type="PDB" id="8CVT">
    <property type="method" value="EM"/>
    <property type="resolution" value="3.00 A"/>
    <property type="chains" value="V=1-534"/>
</dbReference>
<dbReference type="PDB" id="8JRI">
    <property type="method" value="EM"/>
    <property type="resolution" value="3.40 A"/>
    <property type="chains" value="V=1-534"/>
</dbReference>
<dbReference type="PDB" id="8JRT">
    <property type="method" value="EM"/>
    <property type="resolution" value="3.60 A"/>
    <property type="chains" value="V=1-534"/>
</dbReference>
<dbReference type="PDB" id="8JTI">
    <property type="method" value="EM"/>
    <property type="resolution" value="3.80 A"/>
    <property type="chains" value="V=1-534"/>
</dbReference>
<dbReference type="PDB" id="8K0G">
    <property type="method" value="EM"/>
    <property type="resolution" value="3.80 A"/>
    <property type="chains" value="V=1-534"/>
</dbReference>
<dbReference type="PDB" id="8USB">
    <property type="method" value="EM"/>
    <property type="resolution" value="2.73 A"/>
    <property type="chains" value="V=1-534"/>
</dbReference>
<dbReference type="PDB" id="8USC">
    <property type="method" value="EM"/>
    <property type="resolution" value="3.10 A"/>
    <property type="chains" value="V=1-534"/>
</dbReference>
<dbReference type="PDB" id="9E8G">
    <property type="method" value="EM"/>
    <property type="resolution" value="3.01 A"/>
    <property type="chains" value="V=1-534"/>
</dbReference>
<dbReference type="PDB" id="9E8H">
    <property type="method" value="EM"/>
    <property type="resolution" value="2.90 A"/>
    <property type="chains" value="V=1-534"/>
</dbReference>
<dbReference type="PDB" id="9E8I">
    <property type="method" value="EM"/>
    <property type="resolution" value="2.87 A"/>
    <property type="chains" value="V=1-534"/>
</dbReference>
<dbReference type="PDB" id="9E8J">
    <property type="method" value="EM"/>
    <property type="resolution" value="3.47 A"/>
    <property type="chains" value="V=1-534"/>
</dbReference>
<dbReference type="PDB" id="9E8K">
    <property type="method" value="EM"/>
    <property type="resolution" value="4.08 A"/>
    <property type="chains" value="V=1-534"/>
</dbReference>
<dbReference type="PDB" id="9E8L">
    <property type="method" value="EM"/>
    <property type="resolution" value="3.59 A"/>
    <property type="chains" value="V=1-534"/>
</dbReference>
<dbReference type="PDB" id="9E8N">
    <property type="method" value="EM"/>
    <property type="resolution" value="3.62 A"/>
    <property type="chains" value="V=1-534"/>
</dbReference>
<dbReference type="PDB" id="9E8O">
    <property type="method" value="EM"/>
    <property type="resolution" value="3.10 A"/>
    <property type="chains" value="V=1-534"/>
</dbReference>
<dbReference type="PDB" id="9E8Q">
    <property type="method" value="EM"/>
    <property type="resolution" value="3.16 A"/>
    <property type="chains" value="V=1-534"/>
</dbReference>
<dbReference type="PDBsum" id="5GJQ"/>
<dbReference type="PDBsum" id="5GJR"/>
<dbReference type="PDBsum" id="5L4K"/>
<dbReference type="PDBsum" id="5LN3"/>
<dbReference type="PDBsum" id="5M32"/>
<dbReference type="PDBsum" id="5T0C"/>
<dbReference type="PDBsum" id="5T0G"/>
<dbReference type="PDBsum" id="5T0H"/>
<dbReference type="PDBsum" id="5T0I"/>
<dbReference type="PDBsum" id="5T0J"/>
<dbReference type="PDBsum" id="5VFP"/>
<dbReference type="PDBsum" id="5VFQ"/>
<dbReference type="PDBsum" id="5VFR"/>
<dbReference type="PDBsum" id="5VFS"/>
<dbReference type="PDBsum" id="5VFT"/>
<dbReference type="PDBsum" id="5VFU"/>
<dbReference type="PDBsum" id="5VGZ"/>
<dbReference type="PDBsum" id="5VHF"/>
<dbReference type="PDBsum" id="5VHH"/>
<dbReference type="PDBsum" id="5VHI"/>
<dbReference type="PDBsum" id="5VHS"/>
<dbReference type="PDBsum" id="6MSB"/>
<dbReference type="PDBsum" id="6MSD"/>
<dbReference type="PDBsum" id="6MSE"/>
<dbReference type="PDBsum" id="6MSG"/>
<dbReference type="PDBsum" id="6MSH"/>
<dbReference type="PDBsum" id="6MSJ"/>
<dbReference type="PDBsum" id="6MSK"/>
<dbReference type="PDBsum" id="6WJD"/>
<dbReference type="PDBsum" id="6WJN"/>
<dbReference type="PDBsum" id="7QXN"/>
<dbReference type="PDBsum" id="7QXP"/>
<dbReference type="PDBsum" id="7QXU"/>
<dbReference type="PDBsum" id="7QXW"/>
<dbReference type="PDBsum" id="7QXX"/>
<dbReference type="PDBsum" id="7QY7"/>
<dbReference type="PDBsum" id="7QYA"/>
<dbReference type="PDBsum" id="7QYB"/>
<dbReference type="PDBsum" id="7W37"/>
<dbReference type="PDBsum" id="7W38"/>
<dbReference type="PDBsum" id="7W39"/>
<dbReference type="PDBsum" id="7W3A"/>
<dbReference type="PDBsum" id="7W3B"/>
<dbReference type="PDBsum" id="7W3C"/>
<dbReference type="PDBsum" id="7W3F"/>
<dbReference type="PDBsum" id="7W3G"/>
<dbReference type="PDBsum" id="7W3H"/>
<dbReference type="PDBsum" id="7W3I"/>
<dbReference type="PDBsum" id="7W3J"/>
<dbReference type="PDBsum" id="7W3K"/>
<dbReference type="PDBsum" id="7W3M"/>
<dbReference type="PDBsum" id="8CVT"/>
<dbReference type="PDBsum" id="8JRI"/>
<dbReference type="PDBsum" id="8JRT"/>
<dbReference type="PDBsum" id="8JTI"/>
<dbReference type="PDBsum" id="8K0G"/>
<dbReference type="PDBsum" id="8USB"/>
<dbReference type="PDBsum" id="8USC"/>
<dbReference type="PDBsum" id="9E8G"/>
<dbReference type="PDBsum" id="9E8H"/>
<dbReference type="PDBsum" id="9E8I"/>
<dbReference type="PDBsum" id="9E8J"/>
<dbReference type="PDBsum" id="9E8K"/>
<dbReference type="PDBsum" id="9E8L"/>
<dbReference type="PDBsum" id="9E8N"/>
<dbReference type="PDBsum" id="9E8O"/>
<dbReference type="PDBsum" id="9E8Q"/>
<dbReference type="EMDB" id="EMD-14201"/>
<dbReference type="EMDB" id="EMD-14202"/>
<dbReference type="EMDB" id="EMD-14203"/>
<dbReference type="EMDB" id="EMD-14204"/>
<dbReference type="EMDB" id="EMD-14205"/>
<dbReference type="EMDB" id="EMD-14209"/>
<dbReference type="EMDB" id="EMD-14210"/>
<dbReference type="EMDB" id="EMD-14211"/>
<dbReference type="EMDB" id="EMD-21691"/>
<dbReference type="EMDB" id="EMD-21696"/>
<dbReference type="EMDB" id="EMD-27018"/>
<dbReference type="EMDB" id="EMD-32272"/>
<dbReference type="EMDB" id="EMD-32273"/>
<dbReference type="EMDB" id="EMD-32274"/>
<dbReference type="EMDB" id="EMD-32275"/>
<dbReference type="EMDB" id="EMD-32276"/>
<dbReference type="EMDB" id="EMD-32277"/>
<dbReference type="EMDB" id="EMD-32278"/>
<dbReference type="EMDB" id="EMD-32279"/>
<dbReference type="EMDB" id="EMD-32280"/>
<dbReference type="EMDB" id="EMD-32281"/>
<dbReference type="EMDB" id="EMD-32282"/>
<dbReference type="EMDB" id="EMD-32283"/>
<dbReference type="EMDB" id="EMD-32284"/>
<dbReference type="EMDB" id="EMD-36598"/>
<dbReference type="EMDB" id="EMD-36605"/>
<dbReference type="EMDB" id="EMD-36645"/>
<dbReference type="EMDB" id="EMD-36764"/>
<dbReference type="EMDB" id="EMD-4089"/>
<dbReference type="EMDB" id="EMD-42506"/>
<dbReference type="EMDB" id="EMD-42507"/>
<dbReference type="EMDB" id="EMD-47719"/>
<dbReference type="EMDB" id="EMD-47720"/>
<dbReference type="EMDB" id="EMD-47721"/>
<dbReference type="EMDB" id="EMD-47722"/>
<dbReference type="EMDB" id="EMD-47723"/>
<dbReference type="EMDB" id="EMD-47724"/>
<dbReference type="EMDB" id="EMD-47725"/>
<dbReference type="EMDB" id="EMD-47726"/>
<dbReference type="EMDB" id="EMD-47727"/>
<dbReference type="EMDB" id="EMD-60138"/>
<dbReference type="EMDB" id="EMD-60139"/>
<dbReference type="EMDB" id="EMD-8663"/>
<dbReference type="EMDB" id="EMD-8664"/>
<dbReference type="EMDB" id="EMD-8665"/>
<dbReference type="EMDB" id="EMD-8666"/>
<dbReference type="EMDB" id="EMD-8667"/>
<dbReference type="EMDB" id="EMD-8668"/>
<dbReference type="EMDB" id="EMD-8672"/>
<dbReference type="EMDB" id="EMD-8674"/>
<dbReference type="EMDB" id="EMD-8675"/>
<dbReference type="EMDB" id="EMD-8676"/>
<dbReference type="EMDB" id="EMD-8684"/>
<dbReference type="EMDB" id="EMD-9216"/>
<dbReference type="EMDB" id="EMD-9217"/>
<dbReference type="EMDB" id="EMD-9218"/>
<dbReference type="EMDB" id="EMD-9219"/>
<dbReference type="EMDB" id="EMD-9220"/>
<dbReference type="EMDB" id="EMD-9221"/>
<dbReference type="EMDB" id="EMD-9222"/>
<dbReference type="EMDB" id="EMD-9512"/>
<dbReference type="SMR" id="O43242"/>
<dbReference type="BioGRID" id="111682">
    <property type="interactions" value="405"/>
</dbReference>
<dbReference type="ComplexPortal" id="CPX-5993">
    <property type="entry name" value="26S proteasome complex"/>
</dbReference>
<dbReference type="ComplexPortal" id="CPX-8964">
    <property type="entry name" value="19S proteasome regulatory complex"/>
</dbReference>
<dbReference type="ComplexPortal" id="CPX-9082">
    <property type="entry name" value="19S-20S-PA28-alphabeta hybrid proteasome complex"/>
</dbReference>
<dbReference type="ComplexPortal" id="CPX-9085">
    <property type="entry name" value="19S-20S-PA28-gamma hybrid proteasome complex"/>
</dbReference>
<dbReference type="ComplexPortal" id="CPX-9086">
    <property type="entry name" value="30S proteasome complex"/>
</dbReference>
<dbReference type="CORUM" id="O43242"/>
<dbReference type="DIP" id="DIP-27571N"/>
<dbReference type="FunCoup" id="O43242">
    <property type="interactions" value="3005"/>
</dbReference>
<dbReference type="IntAct" id="O43242">
    <property type="interactions" value="152"/>
</dbReference>
<dbReference type="MINT" id="O43242"/>
<dbReference type="STRING" id="9606.ENSP00000264639"/>
<dbReference type="ChEMBL" id="CHEMBL2364701"/>
<dbReference type="GlyGen" id="O43242">
    <property type="glycosylation" value="4 sites, 1 N-linked glycan (1 site), 1 O-linked glycan (3 sites)"/>
</dbReference>
<dbReference type="iPTMnet" id="O43242"/>
<dbReference type="MetOSite" id="O43242"/>
<dbReference type="PhosphoSitePlus" id="O43242"/>
<dbReference type="SwissPalm" id="O43242"/>
<dbReference type="BioMuta" id="PSMD3"/>
<dbReference type="CPTAC" id="CPTAC-152"/>
<dbReference type="CPTAC" id="CPTAC-153"/>
<dbReference type="jPOST" id="O43242"/>
<dbReference type="MassIVE" id="O43242"/>
<dbReference type="PaxDb" id="9606-ENSP00000264639"/>
<dbReference type="PeptideAtlas" id="O43242"/>
<dbReference type="ProteomicsDB" id="48822">
    <molecule id="O43242-1"/>
</dbReference>
<dbReference type="ProteomicsDB" id="5082"/>
<dbReference type="Pumba" id="O43242"/>
<dbReference type="Antibodypedia" id="28451">
    <property type="antibodies" value="301 antibodies from 30 providers"/>
</dbReference>
<dbReference type="DNASU" id="5709"/>
<dbReference type="Ensembl" id="ENST00000264639.9">
    <molecule id="O43242-1"/>
    <property type="protein sequence ID" value="ENSP00000264639.4"/>
    <property type="gene ID" value="ENSG00000108344.15"/>
</dbReference>
<dbReference type="GeneID" id="5709"/>
<dbReference type="KEGG" id="hsa:5709"/>
<dbReference type="MANE-Select" id="ENST00000264639.9">
    <property type="protein sequence ID" value="ENSP00000264639.4"/>
    <property type="RefSeq nucleotide sequence ID" value="NM_002809.4"/>
    <property type="RefSeq protein sequence ID" value="NP_002800.2"/>
</dbReference>
<dbReference type="UCSC" id="uc002htn.3">
    <molecule id="O43242-1"/>
    <property type="organism name" value="human"/>
</dbReference>
<dbReference type="AGR" id="HGNC:9560"/>
<dbReference type="CTD" id="5709"/>
<dbReference type="DisGeNET" id="5709"/>
<dbReference type="GeneCards" id="PSMD3"/>
<dbReference type="HGNC" id="HGNC:9560">
    <property type="gene designation" value="PSMD3"/>
</dbReference>
<dbReference type="HPA" id="ENSG00000108344">
    <property type="expression patterns" value="Tissue enhanced (skeletal)"/>
</dbReference>
<dbReference type="MIM" id="617676">
    <property type="type" value="gene"/>
</dbReference>
<dbReference type="neXtProt" id="NX_O43242"/>
<dbReference type="OpenTargets" id="ENSG00000108344"/>
<dbReference type="PharmGKB" id="PA38123"/>
<dbReference type="VEuPathDB" id="HostDB:ENSG00000108344"/>
<dbReference type="eggNOG" id="KOG2581">
    <property type="taxonomic scope" value="Eukaryota"/>
</dbReference>
<dbReference type="GeneTree" id="ENSGT00940000153653"/>
<dbReference type="HOGENOM" id="CLU_019858_1_2_1"/>
<dbReference type="InParanoid" id="O43242"/>
<dbReference type="OMA" id="AKVYFYF"/>
<dbReference type="OrthoDB" id="1713558at2759"/>
<dbReference type="PAN-GO" id="O43242">
    <property type="GO annotations" value="2 GO annotations based on evolutionary models"/>
</dbReference>
<dbReference type="PhylomeDB" id="O43242"/>
<dbReference type="TreeFam" id="TF106110"/>
<dbReference type="PathwayCommons" id="O43242"/>
<dbReference type="Reactome" id="R-HSA-1169091">
    <property type="pathway name" value="Activation of NF-kappaB in B cells"/>
</dbReference>
<dbReference type="Reactome" id="R-HSA-1234176">
    <property type="pathway name" value="Oxygen-dependent proline hydroxylation of Hypoxia-inducible Factor Alpha"/>
</dbReference>
<dbReference type="Reactome" id="R-HSA-1236974">
    <property type="pathway name" value="ER-Phagosome pathway"/>
</dbReference>
<dbReference type="Reactome" id="R-HSA-1236978">
    <property type="pathway name" value="Cross-presentation of soluble exogenous antigens (endosomes)"/>
</dbReference>
<dbReference type="Reactome" id="R-HSA-174084">
    <property type="pathway name" value="Autodegradation of Cdh1 by Cdh1:APC/C"/>
</dbReference>
<dbReference type="Reactome" id="R-HSA-174113">
    <property type="pathway name" value="SCF-beta-TrCP mediated degradation of Emi1"/>
</dbReference>
<dbReference type="Reactome" id="R-HSA-174154">
    <property type="pathway name" value="APC/C:Cdc20 mediated degradation of Securin"/>
</dbReference>
<dbReference type="Reactome" id="R-HSA-174178">
    <property type="pathway name" value="APC/C:Cdh1 mediated degradation of Cdc20 and other APC/C:Cdh1 targeted proteins in late mitosis/early G1"/>
</dbReference>
<dbReference type="Reactome" id="R-HSA-174184">
    <property type="pathway name" value="Cdc20:Phospho-APC/C mediated degradation of Cyclin A"/>
</dbReference>
<dbReference type="Reactome" id="R-HSA-180534">
    <property type="pathway name" value="Vpu mediated degradation of CD4"/>
</dbReference>
<dbReference type="Reactome" id="R-HSA-180585">
    <property type="pathway name" value="Vif-mediated degradation of APOBEC3G"/>
</dbReference>
<dbReference type="Reactome" id="R-HSA-187577">
    <property type="pathway name" value="SCF(Skp2)-mediated degradation of p27/p21"/>
</dbReference>
<dbReference type="Reactome" id="R-HSA-195253">
    <property type="pathway name" value="Degradation of beta-catenin by the destruction complex"/>
</dbReference>
<dbReference type="Reactome" id="R-HSA-202424">
    <property type="pathway name" value="Downstream TCR signaling"/>
</dbReference>
<dbReference type="Reactome" id="R-HSA-211733">
    <property type="pathway name" value="Regulation of activated PAK-2p34 by proteasome mediated degradation"/>
</dbReference>
<dbReference type="Reactome" id="R-HSA-2467813">
    <property type="pathway name" value="Separation of Sister Chromatids"/>
</dbReference>
<dbReference type="Reactome" id="R-HSA-2871837">
    <property type="pathway name" value="FCERI mediated NF-kB activation"/>
</dbReference>
<dbReference type="Reactome" id="R-HSA-349425">
    <property type="pathway name" value="Autodegradation of the E3 ubiquitin ligase COP1"/>
</dbReference>
<dbReference type="Reactome" id="R-HSA-350562">
    <property type="pathway name" value="Regulation of ornithine decarboxylase (ODC)"/>
</dbReference>
<dbReference type="Reactome" id="R-HSA-382556">
    <property type="pathway name" value="ABC-family proteins mediated transport"/>
</dbReference>
<dbReference type="Reactome" id="R-HSA-450408">
    <property type="pathway name" value="AUF1 (hnRNP D0) binds and destabilizes mRNA"/>
</dbReference>
<dbReference type="Reactome" id="R-HSA-4608870">
    <property type="pathway name" value="Asymmetric localization of PCP proteins"/>
</dbReference>
<dbReference type="Reactome" id="R-HSA-4641257">
    <property type="pathway name" value="Degradation of AXIN"/>
</dbReference>
<dbReference type="Reactome" id="R-HSA-4641258">
    <property type="pathway name" value="Degradation of DVL"/>
</dbReference>
<dbReference type="Reactome" id="R-HSA-5358346">
    <property type="pathway name" value="Hedgehog ligand biogenesis"/>
</dbReference>
<dbReference type="Reactome" id="R-HSA-5362768">
    <property type="pathway name" value="Hh mutants are degraded by ERAD"/>
</dbReference>
<dbReference type="Reactome" id="R-HSA-5607761">
    <property type="pathway name" value="Dectin-1 mediated noncanonical NF-kB signaling"/>
</dbReference>
<dbReference type="Reactome" id="R-HSA-5607764">
    <property type="pathway name" value="CLEC7A (Dectin-1) signaling"/>
</dbReference>
<dbReference type="Reactome" id="R-HSA-5610780">
    <property type="pathway name" value="Degradation of GLI1 by the proteasome"/>
</dbReference>
<dbReference type="Reactome" id="R-HSA-5610783">
    <property type="pathway name" value="Degradation of GLI2 by the proteasome"/>
</dbReference>
<dbReference type="Reactome" id="R-HSA-5610785">
    <property type="pathway name" value="GLI3 is processed to GLI3R by the proteasome"/>
</dbReference>
<dbReference type="Reactome" id="R-HSA-5632684">
    <property type="pathway name" value="Hedgehog 'on' state"/>
</dbReference>
<dbReference type="Reactome" id="R-HSA-5658442">
    <property type="pathway name" value="Regulation of RAS by GAPs"/>
</dbReference>
<dbReference type="Reactome" id="R-HSA-5668541">
    <property type="pathway name" value="TNFR2 non-canonical NF-kB pathway"/>
</dbReference>
<dbReference type="Reactome" id="R-HSA-5676590">
    <property type="pathway name" value="NIK--&gt;noncanonical NF-kB signaling"/>
</dbReference>
<dbReference type="Reactome" id="R-HSA-5678895">
    <property type="pathway name" value="Defective CFTR causes cystic fibrosis"/>
</dbReference>
<dbReference type="Reactome" id="R-HSA-5687128">
    <property type="pathway name" value="MAPK6/MAPK4 signaling"/>
</dbReference>
<dbReference type="Reactome" id="R-HSA-5689603">
    <property type="pathway name" value="UCH proteinases"/>
</dbReference>
<dbReference type="Reactome" id="R-HSA-5689880">
    <property type="pathway name" value="Ub-specific processing proteases"/>
</dbReference>
<dbReference type="Reactome" id="R-HSA-6798695">
    <property type="pathway name" value="Neutrophil degranulation"/>
</dbReference>
<dbReference type="Reactome" id="R-HSA-68867">
    <property type="pathway name" value="Assembly of the pre-replicative complex"/>
</dbReference>
<dbReference type="Reactome" id="R-HSA-68949">
    <property type="pathway name" value="Orc1 removal from chromatin"/>
</dbReference>
<dbReference type="Reactome" id="R-HSA-69017">
    <property type="pathway name" value="CDK-mediated phosphorylation and removal of Cdc6"/>
</dbReference>
<dbReference type="Reactome" id="R-HSA-69481">
    <property type="pathway name" value="G2/M Checkpoints"/>
</dbReference>
<dbReference type="Reactome" id="R-HSA-69601">
    <property type="pathway name" value="Ubiquitin Mediated Degradation of Phosphorylated Cdc25A"/>
</dbReference>
<dbReference type="Reactome" id="R-HSA-75815">
    <property type="pathway name" value="Ubiquitin-dependent degradation of Cyclin D"/>
</dbReference>
<dbReference type="Reactome" id="R-HSA-8852276">
    <property type="pathway name" value="The role of GTSE1 in G2/M progression after G2 checkpoint"/>
</dbReference>
<dbReference type="Reactome" id="R-HSA-8854050">
    <property type="pathway name" value="FBXL7 down-regulates AURKA during mitotic entry and in early mitosis"/>
</dbReference>
<dbReference type="Reactome" id="R-HSA-8939236">
    <property type="pathway name" value="RUNX1 regulates transcription of genes involved in differentiation of HSCs"/>
</dbReference>
<dbReference type="Reactome" id="R-HSA-8939902">
    <property type="pathway name" value="Regulation of RUNX2 expression and activity"/>
</dbReference>
<dbReference type="Reactome" id="R-HSA-8941858">
    <property type="pathway name" value="Regulation of RUNX3 expression and activity"/>
</dbReference>
<dbReference type="Reactome" id="R-HSA-8948751">
    <property type="pathway name" value="Regulation of PTEN stability and activity"/>
</dbReference>
<dbReference type="Reactome" id="R-HSA-8951664">
    <property type="pathway name" value="Neddylation"/>
</dbReference>
<dbReference type="Reactome" id="R-HSA-9010553">
    <property type="pathway name" value="Regulation of expression of SLITs and ROBOs"/>
</dbReference>
<dbReference type="Reactome" id="R-HSA-9020702">
    <property type="pathway name" value="Interleukin-1 signaling"/>
</dbReference>
<dbReference type="Reactome" id="R-HSA-9604323">
    <property type="pathway name" value="Negative regulation of NOTCH4 signaling"/>
</dbReference>
<dbReference type="Reactome" id="R-HSA-9755511">
    <property type="pathway name" value="KEAP1-NFE2L2 pathway"/>
</dbReference>
<dbReference type="Reactome" id="R-HSA-9762114">
    <property type="pathway name" value="GSK3B and BTRC:CUL1-mediated-degradation of NFE2L2"/>
</dbReference>
<dbReference type="Reactome" id="R-HSA-9824272">
    <property type="pathway name" value="Somitogenesis"/>
</dbReference>
<dbReference type="Reactome" id="R-HSA-983168">
    <property type="pathway name" value="Antigen processing: Ubiquitination &amp; Proteasome degradation"/>
</dbReference>
<dbReference type="Reactome" id="R-HSA-9907900">
    <property type="pathway name" value="Proteasome assembly"/>
</dbReference>
<dbReference type="SignaLink" id="O43242"/>
<dbReference type="SIGNOR" id="O43242"/>
<dbReference type="BioGRID-ORCS" id="5709">
    <property type="hits" value="826 hits in 1156 CRISPR screens"/>
</dbReference>
<dbReference type="CD-CODE" id="8C2F96ED">
    <property type="entry name" value="Centrosome"/>
</dbReference>
<dbReference type="ChiTaRS" id="PSMD3">
    <property type="organism name" value="human"/>
</dbReference>
<dbReference type="GeneWiki" id="PSMD3"/>
<dbReference type="GenomeRNAi" id="5709"/>
<dbReference type="Pharos" id="O43242">
    <property type="development level" value="Tbio"/>
</dbReference>
<dbReference type="PRO" id="PR:O43242"/>
<dbReference type="Proteomes" id="UP000005640">
    <property type="component" value="Chromosome 17"/>
</dbReference>
<dbReference type="RNAct" id="O43242">
    <property type="molecule type" value="protein"/>
</dbReference>
<dbReference type="Bgee" id="ENSG00000108344">
    <property type="expression patterns" value="Expressed in gastrocnemius and 204 other cell types or tissues"/>
</dbReference>
<dbReference type="ExpressionAtlas" id="O43242">
    <property type="expression patterns" value="baseline and differential"/>
</dbReference>
<dbReference type="GO" id="GO:0005829">
    <property type="term" value="C:cytosol"/>
    <property type="evidence" value="ECO:0000314"/>
    <property type="project" value="HPA"/>
</dbReference>
<dbReference type="GO" id="GO:0070062">
    <property type="term" value="C:extracellular exosome"/>
    <property type="evidence" value="ECO:0007005"/>
    <property type="project" value="UniProtKB"/>
</dbReference>
<dbReference type="GO" id="GO:0005576">
    <property type="term" value="C:extracellular region"/>
    <property type="evidence" value="ECO:0000304"/>
    <property type="project" value="Reactome"/>
</dbReference>
<dbReference type="GO" id="GO:1904813">
    <property type="term" value="C:ficolin-1-rich granule lumen"/>
    <property type="evidence" value="ECO:0000304"/>
    <property type="project" value="Reactome"/>
</dbReference>
<dbReference type="GO" id="GO:0016020">
    <property type="term" value="C:membrane"/>
    <property type="evidence" value="ECO:0007005"/>
    <property type="project" value="UniProtKB"/>
</dbReference>
<dbReference type="GO" id="GO:0005654">
    <property type="term" value="C:nucleoplasm"/>
    <property type="evidence" value="ECO:0000314"/>
    <property type="project" value="HPA"/>
</dbReference>
<dbReference type="GO" id="GO:0005634">
    <property type="term" value="C:nucleus"/>
    <property type="evidence" value="ECO:0007005"/>
    <property type="project" value="UniProtKB"/>
</dbReference>
<dbReference type="GO" id="GO:0022624">
    <property type="term" value="C:proteasome accessory complex"/>
    <property type="evidence" value="ECO:0000250"/>
    <property type="project" value="UniProtKB"/>
</dbReference>
<dbReference type="GO" id="GO:0000502">
    <property type="term" value="C:proteasome complex"/>
    <property type="evidence" value="ECO:0000314"/>
    <property type="project" value="UniProtKB"/>
</dbReference>
<dbReference type="GO" id="GO:0008541">
    <property type="term" value="C:proteasome regulatory particle, lid subcomplex"/>
    <property type="evidence" value="ECO:0000318"/>
    <property type="project" value="GO_Central"/>
</dbReference>
<dbReference type="GO" id="GO:0034774">
    <property type="term" value="C:secretory granule lumen"/>
    <property type="evidence" value="ECO:0000304"/>
    <property type="project" value="Reactome"/>
</dbReference>
<dbReference type="GO" id="GO:0030234">
    <property type="term" value="F:enzyme regulator activity"/>
    <property type="evidence" value="ECO:0007669"/>
    <property type="project" value="InterPro"/>
</dbReference>
<dbReference type="GO" id="GO:0043161">
    <property type="term" value="P:proteasome-mediated ubiquitin-dependent protein catabolic process"/>
    <property type="evidence" value="ECO:0000303"/>
    <property type="project" value="ComplexPortal"/>
</dbReference>
<dbReference type="GO" id="GO:0042176">
    <property type="term" value="P:regulation of protein catabolic process"/>
    <property type="evidence" value="ECO:0007669"/>
    <property type="project" value="InterPro"/>
</dbReference>
<dbReference type="GO" id="GO:0006511">
    <property type="term" value="P:ubiquitin-dependent protein catabolic process"/>
    <property type="evidence" value="ECO:0000318"/>
    <property type="project" value="GO_Central"/>
</dbReference>
<dbReference type="FunFam" id="1.25.40.10:FF:000174">
    <property type="entry name" value="26S proteasome non-ATPase regulatory subunit 3"/>
    <property type="match status" value="1"/>
</dbReference>
<dbReference type="FunFam" id="1.25.40.570:FF:000009">
    <property type="entry name" value="26S proteasome non-ATPase regulatory subunit 3"/>
    <property type="match status" value="1"/>
</dbReference>
<dbReference type="Gene3D" id="1.25.40.570">
    <property type="match status" value="1"/>
</dbReference>
<dbReference type="Gene3D" id="1.25.40.10">
    <property type="entry name" value="Tetratricopeptide repeat domain"/>
    <property type="match status" value="1"/>
</dbReference>
<dbReference type="InterPro" id="IPR013586">
    <property type="entry name" value="26S_Psome_reg_C"/>
</dbReference>
<dbReference type="InterPro" id="IPR050756">
    <property type="entry name" value="CSN3"/>
</dbReference>
<dbReference type="InterPro" id="IPR000717">
    <property type="entry name" value="PCI_dom"/>
</dbReference>
<dbReference type="InterPro" id="IPR011990">
    <property type="entry name" value="TPR-like_helical_dom_sf"/>
</dbReference>
<dbReference type="InterPro" id="IPR036390">
    <property type="entry name" value="WH_DNA-bd_sf"/>
</dbReference>
<dbReference type="PANTHER" id="PTHR10758:SF2">
    <property type="entry name" value="26S PROTEASOME NON-ATPASE REGULATORY SUBUNIT 3"/>
    <property type="match status" value="1"/>
</dbReference>
<dbReference type="PANTHER" id="PTHR10758">
    <property type="entry name" value="26S PROTEASOME NON-ATPASE REGULATORY SUBUNIT 3/COP9 SIGNALOSOME COMPLEX SUBUNIT 3"/>
    <property type="match status" value="1"/>
</dbReference>
<dbReference type="Pfam" id="PF01399">
    <property type="entry name" value="PCI"/>
    <property type="match status" value="1"/>
</dbReference>
<dbReference type="Pfam" id="PF08375">
    <property type="entry name" value="Rpn3_C"/>
    <property type="match status" value="1"/>
</dbReference>
<dbReference type="SMART" id="SM00753">
    <property type="entry name" value="PAM"/>
    <property type="match status" value="1"/>
</dbReference>
<dbReference type="SMART" id="SM00088">
    <property type="entry name" value="PINT"/>
    <property type="match status" value="1"/>
</dbReference>
<dbReference type="SUPFAM" id="SSF46785">
    <property type="entry name" value="Winged helix' DNA-binding domain"/>
    <property type="match status" value="1"/>
</dbReference>
<dbReference type="PROSITE" id="PS50250">
    <property type="entry name" value="PCI"/>
    <property type="match status" value="1"/>
</dbReference>
<evidence type="ECO:0000255" key="1">
    <source>
        <dbReference type="PROSITE-ProRule" id="PRU01185"/>
    </source>
</evidence>
<evidence type="ECO:0000256" key="2">
    <source>
        <dbReference type="SAM" id="MobiDB-lite"/>
    </source>
</evidence>
<evidence type="ECO:0000269" key="3">
    <source>
    </source>
</evidence>
<evidence type="ECO:0000269" key="4">
    <source>
    </source>
</evidence>
<evidence type="ECO:0000269" key="5">
    <source>
    </source>
</evidence>
<evidence type="ECO:0000269" key="6">
    <source>
    </source>
</evidence>
<evidence type="ECO:0000269" key="7">
    <source>
    </source>
</evidence>
<evidence type="ECO:0000303" key="8">
    <source>
    </source>
</evidence>
<evidence type="ECO:0000305" key="9"/>
<evidence type="ECO:0007744" key="10">
    <source>
    </source>
</evidence>
<evidence type="ECO:0007744" key="11">
    <source>
    </source>
</evidence>
<evidence type="ECO:0007744" key="12">
    <source>
    </source>
</evidence>
<evidence type="ECO:0007829" key="13">
    <source>
        <dbReference type="PDB" id="9E8J"/>
    </source>
</evidence>
<feature type="chain" id="PRO_0000173816" description="26S proteasome non-ATPase regulatory subunit 3">
    <location>
        <begin position="1"/>
        <end position="534"/>
    </location>
</feature>
<feature type="domain" description="PCI" evidence="1">
    <location>
        <begin position="286"/>
        <end position="465"/>
    </location>
</feature>
<feature type="region of interest" description="Disordered" evidence="2">
    <location>
        <begin position="1"/>
        <end position="69"/>
    </location>
</feature>
<feature type="region of interest" description="Disordered" evidence="2">
    <location>
        <begin position="500"/>
        <end position="534"/>
    </location>
</feature>
<feature type="compositionally biased region" description="Basic and acidic residues" evidence="2">
    <location>
        <begin position="1"/>
        <end position="16"/>
    </location>
</feature>
<feature type="compositionally biased region" description="Pro residues" evidence="2">
    <location>
        <begin position="17"/>
        <end position="32"/>
    </location>
</feature>
<feature type="compositionally biased region" description="Basic and acidic residues" evidence="2">
    <location>
        <begin position="501"/>
        <end position="525"/>
    </location>
</feature>
<feature type="modified residue" description="Phosphoserine" evidence="10">
    <location>
        <position position="418"/>
    </location>
</feature>
<feature type="modified residue" description="Phosphoserine" evidence="10">
    <location>
        <position position="430"/>
    </location>
</feature>
<feature type="cross-link" description="Glycyl lysine isopeptide (Lys-Gly) (interchain with G-Cter in SUMO1); alternate" evidence="11">
    <location>
        <position position="38"/>
    </location>
</feature>
<feature type="cross-link" description="Glycyl lysine isopeptide (Lys-Gly) (interchain with G-Cter in SUMO2); alternate" evidence="12">
    <location>
        <position position="38"/>
    </location>
</feature>
<feature type="splice variant" id="VSP_056362" description="In isoform 2." evidence="8">
    <location>
        <begin position="1"/>
        <end position="138"/>
    </location>
</feature>
<feature type="splice variant" id="VSP_056363" description="In isoform 2." evidence="8">
    <original>AMRFPPKSYNKDLESAEERREREQQDLEFAKEMAEDDDDSFP</original>
    <variation>GW</variation>
    <location>
        <begin position="493"/>
        <end position="534"/>
    </location>
</feature>
<feature type="sequence conflict" description="In Ref. 1; BAA23651." evidence="9" ref="1">
    <original>A</original>
    <variation>V</variation>
    <location>
        <position position="60"/>
    </location>
</feature>
<feature type="sequence conflict" description="In Ref. 6; AAH12302." evidence="9" ref="6">
    <original>TP</original>
    <variation>NT</variation>
    <location>
        <begin position="157"/>
        <end position="158"/>
    </location>
</feature>
<feature type="sequence conflict" description="In Ref. 6; AAH12302." evidence="9" ref="6">
    <original>E</original>
    <variation>V</variation>
    <location>
        <position position="304"/>
    </location>
</feature>
<feature type="helix" evidence="13">
    <location>
        <begin position="59"/>
        <end position="88"/>
    </location>
</feature>
<feature type="helix" evidence="13">
    <location>
        <begin position="92"/>
        <end position="105"/>
    </location>
</feature>
<feature type="helix" evidence="13">
    <location>
        <begin position="110"/>
        <end position="119"/>
    </location>
</feature>
<feature type="helix" evidence="13">
    <location>
        <begin position="126"/>
        <end position="131"/>
    </location>
</feature>
<feature type="turn" evidence="13">
    <location>
        <begin position="132"/>
        <end position="134"/>
    </location>
</feature>
<feature type="helix" evidence="13">
    <location>
        <begin position="153"/>
        <end position="156"/>
    </location>
</feature>
<feature type="helix" evidence="13">
    <location>
        <begin position="161"/>
        <end position="177"/>
    </location>
</feature>
<feature type="helix" evidence="13">
    <location>
        <begin position="181"/>
        <end position="197"/>
    </location>
</feature>
<feature type="helix" evidence="13">
    <location>
        <begin position="203"/>
        <end position="221"/>
    </location>
</feature>
<feature type="helix" evidence="13">
    <location>
        <begin position="226"/>
        <end position="239"/>
    </location>
</feature>
<feature type="turn" evidence="13">
    <location>
        <begin position="240"/>
        <end position="242"/>
    </location>
</feature>
<feature type="helix" evidence="13">
    <location>
        <begin position="245"/>
        <end position="260"/>
    </location>
</feature>
<feature type="helix" evidence="13">
    <location>
        <begin position="264"/>
        <end position="273"/>
    </location>
</feature>
<feature type="helix" evidence="13">
    <location>
        <begin position="282"/>
        <end position="298"/>
    </location>
</feature>
<feature type="helix" evidence="13">
    <location>
        <begin position="302"/>
        <end position="314"/>
    </location>
</feature>
<feature type="strand" evidence="13">
    <location>
        <begin position="318"/>
        <end position="320"/>
    </location>
</feature>
<feature type="helix" evidence="13">
    <location>
        <begin position="322"/>
        <end position="338"/>
    </location>
</feature>
<feature type="helix" evidence="13">
    <location>
        <begin position="345"/>
        <end position="349"/>
    </location>
</feature>
<feature type="helix" evidence="13">
    <location>
        <begin position="351"/>
        <end position="369"/>
    </location>
</feature>
<feature type="helix" evidence="13">
    <location>
        <begin position="372"/>
        <end position="389"/>
    </location>
</feature>
<feature type="helix" evidence="13">
    <location>
        <begin position="392"/>
        <end position="399"/>
    </location>
</feature>
<feature type="turn" evidence="13">
    <location>
        <begin position="400"/>
        <end position="402"/>
    </location>
</feature>
<feature type="helix" evidence="13">
    <location>
        <begin position="403"/>
        <end position="413"/>
    </location>
</feature>
<feature type="helix" evidence="13">
    <location>
        <begin position="419"/>
        <end position="426"/>
    </location>
</feature>
<feature type="helix" evidence="13">
    <location>
        <begin position="431"/>
        <end position="443"/>
    </location>
</feature>
<feature type="strand" evidence="13">
    <location>
        <begin position="449"/>
        <end position="452"/>
    </location>
</feature>
<feature type="turn" evidence="13">
    <location>
        <begin position="453"/>
        <end position="456"/>
    </location>
</feature>
<feature type="strand" evidence="13">
    <location>
        <begin position="457"/>
        <end position="460"/>
    </location>
</feature>
<feature type="helix" evidence="13">
    <location>
        <begin position="466"/>
        <end position="468"/>
    </location>
</feature>
<feature type="helix" evidence="13">
    <location>
        <begin position="471"/>
        <end position="493"/>
    </location>
</feature>
<sequence>MKQEGSARRRGADKAKPPPGGGEQEPPPPPAPQDVEMKEEAATGGGSTGEADGKTAAAAAEHSQRELDTVTLEDIKEHVKQLEKAVSGKEPRFVLRALRMLPSTSRRLNHYVLYKAVQGFFTSNNATRDFLLPFLEEPMDTEADLQFRPRTGKAASTPLLPEVEAYLQLLVVIFMMNSKRYKEAQKISDDLMQKISTQNRRALDLVAAKCYYYHARVYEFLDKLDVVRSFLHARLRTATLRHDADGQATLLNLLLRNYLHYSLYDQAEKLVSKSVFPEQANNNEWARYLYYTGRIKAIQLEYSEARRTMTNALRKAPQHTAVGFKQTVHKLLIVVELLLGEIPDRLQFRQPSLKRSLMPYFLLTQAVRTGNLAKFNQVLDQFGEKFQADGTYTLIIRLRHNVIKTGVRMISLSYSRISLADIAQKLQLDSPEDAEFIVAKAIRDGVIEASINHEKGYVQSKEMIDIYSTREPQLAFHQRISFCLDIHNMSVKAMRFPPKSYNKDLESAEERREREQQDLEFAKEMAEDDDDSFP</sequence>
<reference key="1">
    <citation type="journal article" date="1997" name="Mol. Biol. Cell">
        <title>Yeast counterparts of subunits S5a and p58 (S3) of the human 26S proteasome are encoded by two multicopy suppressors of nin1-1.</title>
        <authorList>
            <person name="Kominami K."/>
            <person name="Okura N."/>
            <person name="Kawamura M."/>
            <person name="Demartino G.N."/>
            <person name="Slaughter C.A."/>
            <person name="Shimbara N."/>
            <person name="Chung C.H."/>
            <person name="Fujimuro M."/>
            <person name="Yokosawa H."/>
            <person name="Shimizu Y."/>
            <person name="Tanahashi N."/>
            <person name="Tanaka K."/>
            <person name="Toh-e A."/>
        </authorList>
    </citation>
    <scope>NUCLEOTIDE SEQUENCE [MRNA] (ISOFORM 1)</scope>
    <source>
        <tissue>Hepatoblastoma</tissue>
    </source>
</reference>
<reference key="2">
    <citation type="submission" date="2003-05" db="EMBL/GenBank/DDBJ databases">
        <title>Cloning of human full-length CDSs in BD Creator(TM) system donor vector.</title>
        <authorList>
            <person name="Kalnine N."/>
            <person name="Chen X."/>
            <person name="Rolfs A."/>
            <person name="Halleck A."/>
            <person name="Hines L."/>
            <person name="Eisenstein S."/>
            <person name="Koundinya M."/>
            <person name="Raphael J."/>
            <person name="Moreira D."/>
            <person name="Kelley T."/>
            <person name="LaBaer J."/>
            <person name="Lin Y."/>
            <person name="Phelan M."/>
            <person name="Farmer A."/>
        </authorList>
    </citation>
    <scope>NUCLEOTIDE SEQUENCE [LARGE SCALE MRNA] (ISOFORM 1)</scope>
</reference>
<reference key="3">
    <citation type="journal article" date="2004" name="Nat. Genet.">
        <title>Complete sequencing and characterization of 21,243 full-length human cDNAs.</title>
        <authorList>
            <person name="Ota T."/>
            <person name="Suzuki Y."/>
            <person name="Nishikawa T."/>
            <person name="Otsuki T."/>
            <person name="Sugiyama T."/>
            <person name="Irie R."/>
            <person name="Wakamatsu A."/>
            <person name="Hayashi K."/>
            <person name="Sato H."/>
            <person name="Nagai K."/>
            <person name="Kimura K."/>
            <person name="Makita H."/>
            <person name="Sekine M."/>
            <person name="Obayashi M."/>
            <person name="Nishi T."/>
            <person name="Shibahara T."/>
            <person name="Tanaka T."/>
            <person name="Ishii S."/>
            <person name="Yamamoto J."/>
            <person name="Saito K."/>
            <person name="Kawai Y."/>
            <person name="Isono Y."/>
            <person name="Nakamura Y."/>
            <person name="Nagahari K."/>
            <person name="Murakami K."/>
            <person name="Yasuda T."/>
            <person name="Iwayanagi T."/>
            <person name="Wagatsuma M."/>
            <person name="Shiratori A."/>
            <person name="Sudo H."/>
            <person name="Hosoiri T."/>
            <person name="Kaku Y."/>
            <person name="Kodaira H."/>
            <person name="Kondo H."/>
            <person name="Sugawara M."/>
            <person name="Takahashi M."/>
            <person name="Kanda K."/>
            <person name="Yokoi T."/>
            <person name="Furuya T."/>
            <person name="Kikkawa E."/>
            <person name="Omura Y."/>
            <person name="Abe K."/>
            <person name="Kamihara K."/>
            <person name="Katsuta N."/>
            <person name="Sato K."/>
            <person name="Tanikawa M."/>
            <person name="Yamazaki M."/>
            <person name="Ninomiya K."/>
            <person name="Ishibashi T."/>
            <person name="Yamashita H."/>
            <person name="Murakawa K."/>
            <person name="Fujimori K."/>
            <person name="Tanai H."/>
            <person name="Kimata M."/>
            <person name="Watanabe M."/>
            <person name="Hiraoka S."/>
            <person name="Chiba Y."/>
            <person name="Ishida S."/>
            <person name="Ono Y."/>
            <person name="Takiguchi S."/>
            <person name="Watanabe S."/>
            <person name="Yosida M."/>
            <person name="Hotuta T."/>
            <person name="Kusano J."/>
            <person name="Kanehori K."/>
            <person name="Takahashi-Fujii A."/>
            <person name="Hara H."/>
            <person name="Tanase T.-O."/>
            <person name="Nomura Y."/>
            <person name="Togiya S."/>
            <person name="Komai F."/>
            <person name="Hara R."/>
            <person name="Takeuchi K."/>
            <person name="Arita M."/>
            <person name="Imose N."/>
            <person name="Musashino K."/>
            <person name="Yuuki H."/>
            <person name="Oshima A."/>
            <person name="Sasaki N."/>
            <person name="Aotsuka S."/>
            <person name="Yoshikawa Y."/>
            <person name="Matsunawa H."/>
            <person name="Ichihara T."/>
            <person name="Shiohata N."/>
            <person name="Sano S."/>
            <person name="Moriya S."/>
            <person name="Momiyama H."/>
            <person name="Satoh N."/>
            <person name="Takami S."/>
            <person name="Terashima Y."/>
            <person name="Suzuki O."/>
            <person name="Nakagawa S."/>
            <person name="Senoh A."/>
            <person name="Mizoguchi H."/>
            <person name="Goto Y."/>
            <person name="Shimizu F."/>
            <person name="Wakebe H."/>
            <person name="Hishigaki H."/>
            <person name="Watanabe T."/>
            <person name="Sugiyama A."/>
            <person name="Takemoto M."/>
            <person name="Kawakami B."/>
            <person name="Yamazaki M."/>
            <person name="Watanabe K."/>
            <person name="Kumagai A."/>
            <person name="Itakura S."/>
            <person name="Fukuzumi Y."/>
            <person name="Fujimori Y."/>
            <person name="Komiyama M."/>
            <person name="Tashiro H."/>
            <person name="Tanigami A."/>
            <person name="Fujiwara T."/>
            <person name="Ono T."/>
            <person name="Yamada K."/>
            <person name="Fujii Y."/>
            <person name="Ozaki K."/>
            <person name="Hirao M."/>
            <person name="Ohmori Y."/>
            <person name="Kawabata A."/>
            <person name="Hikiji T."/>
            <person name="Kobatake N."/>
            <person name="Inagaki H."/>
            <person name="Ikema Y."/>
            <person name="Okamoto S."/>
            <person name="Okitani R."/>
            <person name="Kawakami T."/>
            <person name="Noguchi S."/>
            <person name="Itoh T."/>
            <person name="Shigeta K."/>
            <person name="Senba T."/>
            <person name="Matsumura K."/>
            <person name="Nakajima Y."/>
            <person name="Mizuno T."/>
            <person name="Morinaga M."/>
            <person name="Sasaki M."/>
            <person name="Togashi T."/>
            <person name="Oyama M."/>
            <person name="Hata H."/>
            <person name="Watanabe M."/>
            <person name="Komatsu T."/>
            <person name="Mizushima-Sugano J."/>
            <person name="Satoh T."/>
            <person name="Shirai Y."/>
            <person name="Takahashi Y."/>
            <person name="Nakagawa K."/>
            <person name="Okumura K."/>
            <person name="Nagase T."/>
            <person name="Nomura N."/>
            <person name="Kikuchi H."/>
            <person name="Masuho Y."/>
            <person name="Yamashita R."/>
            <person name="Nakai K."/>
            <person name="Yada T."/>
            <person name="Nakamura Y."/>
            <person name="Ohara O."/>
            <person name="Isogai T."/>
            <person name="Sugano S."/>
        </authorList>
    </citation>
    <scope>NUCLEOTIDE SEQUENCE [LARGE SCALE MRNA] (ISOFORMS 1 AND 2)</scope>
    <source>
        <tissue>Pericardium</tissue>
    </source>
</reference>
<reference key="4">
    <citation type="journal article" date="2006" name="Nature">
        <title>DNA sequence of human chromosome 17 and analysis of rearrangement in the human lineage.</title>
        <authorList>
            <person name="Zody M.C."/>
            <person name="Garber M."/>
            <person name="Adams D.J."/>
            <person name="Sharpe T."/>
            <person name="Harrow J."/>
            <person name="Lupski J.R."/>
            <person name="Nicholson C."/>
            <person name="Searle S.M."/>
            <person name="Wilming L."/>
            <person name="Young S.K."/>
            <person name="Abouelleil A."/>
            <person name="Allen N.R."/>
            <person name="Bi W."/>
            <person name="Bloom T."/>
            <person name="Borowsky M.L."/>
            <person name="Bugalter B.E."/>
            <person name="Butler J."/>
            <person name="Chang J.L."/>
            <person name="Chen C.-K."/>
            <person name="Cook A."/>
            <person name="Corum B."/>
            <person name="Cuomo C.A."/>
            <person name="de Jong P.J."/>
            <person name="DeCaprio D."/>
            <person name="Dewar K."/>
            <person name="FitzGerald M."/>
            <person name="Gilbert J."/>
            <person name="Gibson R."/>
            <person name="Gnerre S."/>
            <person name="Goldstein S."/>
            <person name="Grafham D.V."/>
            <person name="Grocock R."/>
            <person name="Hafez N."/>
            <person name="Hagopian D.S."/>
            <person name="Hart E."/>
            <person name="Norman C.H."/>
            <person name="Humphray S."/>
            <person name="Jaffe D.B."/>
            <person name="Jones M."/>
            <person name="Kamal M."/>
            <person name="Khodiyar V.K."/>
            <person name="LaButti K."/>
            <person name="Laird G."/>
            <person name="Lehoczky J."/>
            <person name="Liu X."/>
            <person name="Lokyitsang T."/>
            <person name="Loveland J."/>
            <person name="Lui A."/>
            <person name="Macdonald P."/>
            <person name="Major J.E."/>
            <person name="Matthews L."/>
            <person name="Mauceli E."/>
            <person name="McCarroll S.A."/>
            <person name="Mihalev A.H."/>
            <person name="Mudge J."/>
            <person name="Nguyen C."/>
            <person name="Nicol R."/>
            <person name="O'Leary S.B."/>
            <person name="Osoegawa K."/>
            <person name="Schwartz D.C."/>
            <person name="Shaw-Smith C."/>
            <person name="Stankiewicz P."/>
            <person name="Steward C."/>
            <person name="Swarbreck D."/>
            <person name="Venkataraman V."/>
            <person name="Whittaker C.A."/>
            <person name="Yang X."/>
            <person name="Zimmer A.R."/>
            <person name="Bradley A."/>
            <person name="Hubbard T."/>
            <person name="Birren B.W."/>
            <person name="Rogers J."/>
            <person name="Lander E.S."/>
            <person name="Nusbaum C."/>
        </authorList>
    </citation>
    <scope>NUCLEOTIDE SEQUENCE [LARGE SCALE GENOMIC DNA]</scope>
</reference>
<reference key="5">
    <citation type="submission" date="2005-07" db="EMBL/GenBank/DDBJ databases">
        <authorList>
            <person name="Mural R.J."/>
            <person name="Istrail S."/>
            <person name="Sutton G.G."/>
            <person name="Florea L."/>
            <person name="Halpern A.L."/>
            <person name="Mobarry C.M."/>
            <person name="Lippert R."/>
            <person name="Walenz B."/>
            <person name="Shatkay H."/>
            <person name="Dew I."/>
            <person name="Miller J.R."/>
            <person name="Flanigan M.J."/>
            <person name="Edwards N.J."/>
            <person name="Bolanos R."/>
            <person name="Fasulo D."/>
            <person name="Halldorsson B.V."/>
            <person name="Hannenhalli S."/>
            <person name="Turner R."/>
            <person name="Yooseph S."/>
            <person name="Lu F."/>
            <person name="Nusskern D.R."/>
            <person name="Shue B.C."/>
            <person name="Zheng X.H."/>
            <person name="Zhong F."/>
            <person name="Delcher A.L."/>
            <person name="Huson D.H."/>
            <person name="Kravitz S.A."/>
            <person name="Mouchard L."/>
            <person name="Reinert K."/>
            <person name="Remington K.A."/>
            <person name="Clark A.G."/>
            <person name="Waterman M.S."/>
            <person name="Eichler E.E."/>
            <person name="Adams M.D."/>
            <person name="Hunkapiller M.W."/>
            <person name="Myers E.W."/>
            <person name="Venter J.C."/>
        </authorList>
    </citation>
    <scope>NUCLEOTIDE SEQUENCE [LARGE SCALE GENOMIC DNA]</scope>
</reference>
<reference key="6">
    <citation type="journal article" date="2004" name="Genome Res.">
        <title>The status, quality, and expansion of the NIH full-length cDNA project: the Mammalian Gene Collection (MGC).</title>
        <authorList>
            <consortium name="The MGC Project Team"/>
        </authorList>
    </citation>
    <scope>NUCLEOTIDE SEQUENCE [LARGE SCALE MRNA] (ISOFORM 1)</scope>
    <source>
        <tissue>Eye</tissue>
        <tissue>Lung</tissue>
        <tissue>Pancreas</tissue>
        <tissue>Skin</tissue>
    </source>
</reference>
<reference key="7">
    <citation type="journal article" date="1992" name="Eur. J. Biochem.">
        <title>Demonstration that a human 26S proteolytic complex consists of a proteasome and multiple associated protein components and hydrolyzes ATP and ubiquitin-ligated proteins by closely linked mechanisms.</title>
        <authorList>
            <person name="Kanayama H.O."/>
            <person name="Tamura T."/>
            <person name="Ugai S."/>
            <person name="Kagawa S."/>
            <person name="Tanahashi N."/>
            <person name="Yoshimura T."/>
            <person name="Tanaka K."/>
            <person name="Ichihara A."/>
        </authorList>
    </citation>
    <scope>FUNCTION</scope>
</reference>
<reference key="8">
    <citation type="journal article" date="2004" name="FEBS Lett.">
        <title>Ubiquilin interacts with ubiquitylated proteins and proteasome through its ubiquitin-associated and ubiquitin-like domains.</title>
        <authorList>
            <person name="Ko H.S."/>
            <person name="Uehara T."/>
            <person name="Tsuruma K."/>
            <person name="Nomura Y."/>
        </authorList>
    </citation>
    <scope>INTERACTION WITH UBQLN1</scope>
</reference>
<reference key="9">
    <citation type="journal article" date="2007" name="Biochemistry">
        <title>Mass spectrometric characterization of the affinity-purified human 26S proteasome complex.</title>
        <authorList>
            <person name="Wang X."/>
            <person name="Chen C.-F."/>
            <person name="Baker P.R."/>
            <person name="Chen P.-L."/>
            <person name="Kaiser P."/>
            <person name="Huang L."/>
        </authorList>
    </citation>
    <scope>IDENTIFICATION BY MASS SPECTROMETRY [LARGE SCALE ANALYSIS]</scope>
    <source>
        <tissue>Embryonic kidney</tissue>
    </source>
</reference>
<reference key="10">
    <citation type="journal article" date="2011" name="BMC Syst. Biol.">
        <title>Initial characterization of the human central proteome.</title>
        <authorList>
            <person name="Burkard T.R."/>
            <person name="Planyavsky M."/>
            <person name="Kaupe I."/>
            <person name="Breitwieser F.P."/>
            <person name="Buerckstuemmer T."/>
            <person name="Bennett K.L."/>
            <person name="Superti-Furga G."/>
            <person name="Colinge J."/>
        </authorList>
    </citation>
    <scope>IDENTIFICATION BY MASS SPECTROMETRY [LARGE SCALE ANALYSIS]</scope>
</reference>
<reference key="11">
    <citation type="journal article" date="2012" name="Proc. Natl. Acad. Sci. U.S.A.">
        <title>N-terminal acetylome analyses and functional insights of the N-terminal acetyltransferase NatB.</title>
        <authorList>
            <person name="Van Damme P."/>
            <person name="Lasa M."/>
            <person name="Polevoda B."/>
            <person name="Gazquez C."/>
            <person name="Elosegui-Artola A."/>
            <person name="Kim D.S."/>
            <person name="De Juan-Pardo E."/>
            <person name="Demeyer K."/>
            <person name="Hole K."/>
            <person name="Larrea E."/>
            <person name="Timmerman E."/>
            <person name="Prieto J."/>
            <person name="Arnesen T."/>
            <person name="Sherman F."/>
            <person name="Gevaert K."/>
            <person name="Aldabe R."/>
        </authorList>
    </citation>
    <scope>IDENTIFICATION BY MASS SPECTROMETRY [LARGE SCALE ANALYSIS]</scope>
</reference>
<reference key="12">
    <citation type="journal article" date="2013" name="J. Proteome Res.">
        <title>Toward a comprehensive characterization of a human cancer cell phosphoproteome.</title>
        <authorList>
            <person name="Zhou H."/>
            <person name="Di Palma S."/>
            <person name="Preisinger C."/>
            <person name="Peng M."/>
            <person name="Polat A.N."/>
            <person name="Heck A.J."/>
            <person name="Mohammed S."/>
        </authorList>
    </citation>
    <scope>PHOSPHORYLATION [LARGE SCALE ANALYSIS] AT SER-418 AND SER-430</scope>
    <scope>IDENTIFICATION BY MASS SPECTROMETRY [LARGE SCALE ANALYSIS]</scope>
    <source>
        <tissue>Erythroleukemia</tissue>
    </source>
</reference>
<reference key="13">
    <citation type="journal article" date="2014" name="J. Proteomics">
        <title>An enzyme assisted RP-RPLC approach for in-depth analysis of human liver phosphoproteome.</title>
        <authorList>
            <person name="Bian Y."/>
            <person name="Song C."/>
            <person name="Cheng K."/>
            <person name="Dong M."/>
            <person name="Wang F."/>
            <person name="Huang J."/>
            <person name="Sun D."/>
            <person name="Wang L."/>
            <person name="Ye M."/>
            <person name="Zou H."/>
        </authorList>
    </citation>
    <scope>IDENTIFICATION BY MASS SPECTROMETRY [LARGE SCALE ANALYSIS]</scope>
    <source>
        <tissue>Liver</tissue>
    </source>
</reference>
<reference key="14">
    <citation type="journal article" date="2014" name="Proc. Natl. Acad. Sci. U.S.A.">
        <title>Mapping of SUMO sites and analysis of SUMOylation changes induced by external stimuli.</title>
        <authorList>
            <person name="Impens F."/>
            <person name="Radoshevich L."/>
            <person name="Cossart P."/>
            <person name="Ribet D."/>
        </authorList>
    </citation>
    <scope>SUMOYLATION [LARGE SCALE ANALYSIS] AT LYS-38</scope>
    <scope>IDENTIFICATION BY MASS SPECTROMETRY [LARGE SCALE ANALYSIS]</scope>
</reference>
<reference key="15">
    <citation type="journal article" date="2015" name="PLoS ONE">
        <title>Identification of Novel Proteins Co-Purifying with Cockayne Syndrome Group B (CSB) Reveals Potential Roles for CSB in RNA Metabolism and Chromatin Dynamics.</title>
        <authorList>
            <person name="Nicolai S."/>
            <person name="Filippi S."/>
            <person name="Caputo M."/>
            <person name="Cipak L."/>
            <person name="Gregan J."/>
            <person name="Ammerer G."/>
            <person name="Frontini M."/>
            <person name="Willems D."/>
            <person name="Prantera G."/>
            <person name="Balajee A.S."/>
            <person name="Proietti-De-Santis L."/>
        </authorList>
    </citation>
    <scope>INTERACTION WITH ERCC6</scope>
</reference>
<reference key="16">
    <citation type="journal article" date="2017" name="Nat. Struct. Mol. Biol.">
        <title>Site-specific mapping of the human SUMO proteome reveals co-modification with phosphorylation.</title>
        <authorList>
            <person name="Hendriks I.A."/>
            <person name="Lyon D."/>
            <person name="Young C."/>
            <person name="Jensen L.J."/>
            <person name="Vertegaal A.C."/>
            <person name="Nielsen M.L."/>
        </authorList>
    </citation>
    <scope>SUMOYLATION [LARGE SCALE ANALYSIS] AT LYS-38</scope>
    <scope>IDENTIFICATION BY MASS SPECTROMETRY [LARGE SCALE ANALYSIS]</scope>
</reference>
<reference key="17">
    <citation type="journal article" date="2016" name="Nat. Struct. Mol. Biol.">
        <title>An atomic structure of the human 26S proteasome.</title>
        <authorList>
            <person name="Huang X."/>
            <person name="Luan B."/>
            <person name="Wu J."/>
            <person name="Shi Y."/>
        </authorList>
    </citation>
    <scope>STRUCTURE BY ELECTRON MICROSCOPY (3.50 ANGSTROMS)</scope>
    <scope>SUBUNIT</scope>
</reference>
<reference key="18">
    <citation type="journal article" date="2016" name="Proc. Natl. Acad. Sci. U.S.A.">
        <title>Structure of the human 26S proteasome at a resolution of 3.9 Aa.</title>
        <authorList>
            <person name="Schweitzer A."/>
            <person name="Aufderheide A."/>
            <person name="Rudack T."/>
            <person name="Beck F."/>
            <person name="Pfeifer G."/>
            <person name="Plitzko J.M."/>
            <person name="Sakata E."/>
            <person name="Schulten K."/>
            <person name="Foerster F."/>
            <person name="Baumeister W."/>
        </authorList>
    </citation>
    <scope>STRUCTURE BY ELECTRON MICROSCOPY (4.50 ANGSTROMS)</scope>
    <scope>SUBUNIT</scope>
</reference>
<keyword id="KW-0002">3D-structure</keyword>
<keyword id="KW-0025">Alternative splicing</keyword>
<keyword id="KW-1017">Isopeptide bond</keyword>
<keyword id="KW-0597">Phosphoprotein</keyword>
<keyword id="KW-0647">Proteasome</keyword>
<keyword id="KW-1267">Proteomics identification</keyword>
<keyword id="KW-1185">Reference proteome</keyword>
<keyword id="KW-0832">Ubl conjugation</keyword>
<proteinExistence type="evidence at protein level"/>
<protein>
    <recommendedName>
        <fullName>26S proteasome non-ATPase regulatory subunit 3</fullName>
    </recommendedName>
    <alternativeName>
        <fullName>26S proteasome regulatory subunit RPN3</fullName>
    </alternativeName>
    <alternativeName>
        <fullName>26S proteasome regulatory subunit S3</fullName>
    </alternativeName>
    <alternativeName>
        <fullName>Proteasome subunit p58</fullName>
    </alternativeName>
</protein>
<gene>
    <name type="primary">PSMD3</name>
</gene>